<evidence type="ECO:0000255" key="1"/>
<evidence type="ECO:0000305" key="2"/>
<gene>
    <name type="ordered locus">sll0481</name>
</gene>
<reference key="1">
    <citation type="journal article" date="1995" name="DNA Res.">
        <title>Sequence analysis of the genome of the unicellular cyanobacterium Synechocystis sp. strain PCC6803. I. Sequence features in the 1 Mb region from map positions 64% to 92% of the genome.</title>
        <authorList>
            <person name="Kaneko T."/>
            <person name="Tanaka A."/>
            <person name="Sato S."/>
            <person name="Kotani H."/>
            <person name="Sazuka T."/>
            <person name="Miyajima N."/>
            <person name="Sugiura M."/>
            <person name="Tabata S."/>
        </authorList>
    </citation>
    <scope>NUCLEOTIDE SEQUENCE [LARGE SCALE GENOMIC DNA]</scope>
    <source>
        <strain>ATCC 27184 / PCC 6803 / N-1</strain>
    </source>
</reference>
<reference key="2">
    <citation type="journal article" date="1996" name="DNA Res.">
        <title>Sequence analysis of the genome of the unicellular cyanobacterium Synechocystis sp. strain PCC6803. II. Sequence determination of the entire genome and assignment of potential protein-coding regions.</title>
        <authorList>
            <person name="Kaneko T."/>
            <person name="Sato S."/>
            <person name="Kotani H."/>
            <person name="Tanaka A."/>
            <person name="Asamizu E."/>
            <person name="Nakamura Y."/>
            <person name="Miyajima N."/>
            <person name="Hirosawa M."/>
            <person name="Sugiura M."/>
            <person name="Sasamoto S."/>
            <person name="Kimura T."/>
            <person name="Hosouchi T."/>
            <person name="Matsuno A."/>
            <person name="Muraki A."/>
            <person name="Nakazaki N."/>
            <person name="Naruo K."/>
            <person name="Okumura S."/>
            <person name="Shimpo S."/>
            <person name="Takeuchi C."/>
            <person name="Wada T."/>
            <person name="Watanabe A."/>
            <person name="Yamada M."/>
            <person name="Yasuda M."/>
            <person name="Tabata S."/>
        </authorList>
    </citation>
    <scope>NUCLEOTIDE SEQUENCE [LARGE SCALE GENOMIC DNA]</scope>
    <source>
        <strain>ATCC 27184 / PCC 6803 / Kazusa</strain>
    </source>
</reference>
<organism>
    <name type="scientific">Synechocystis sp. (strain ATCC 27184 / PCC 6803 / Kazusa)</name>
    <dbReference type="NCBI Taxonomy" id="1111708"/>
    <lineage>
        <taxon>Bacteria</taxon>
        <taxon>Bacillati</taxon>
        <taxon>Cyanobacteriota</taxon>
        <taxon>Cyanophyceae</taxon>
        <taxon>Synechococcales</taxon>
        <taxon>Merismopediaceae</taxon>
        <taxon>Synechocystis</taxon>
    </lineage>
</organism>
<proteinExistence type="predicted"/>
<protein>
    <recommendedName>
        <fullName>Uncharacterized protein sll0481</fullName>
    </recommendedName>
</protein>
<comment type="subcellular location">
    <subcellularLocation>
        <location evidence="2">Cell membrane</location>
        <topology evidence="2">Multi-pass membrane protein</topology>
    </subcellularLocation>
</comment>
<comment type="similarity">
    <text evidence="2">To E.coli YdgK.</text>
</comment>
<feature type="chain" id="PRO_0000157872" description="Uncharacterized protein sll0481">
    <location>
        <begin position="1"/>
        <end position="155"/>
    </location>
</feature>
<feature type="transmembrane region" description="Helical" evidence="1">
    <location>
        <begin position="33"/>
        <end position="53"/>
    </location>
</feature>
<feature type="transmembrane region" description="Helical" evidence="1">
    <location>
        <begin position="83"/>
        <end position="103"/>
    </location>
</feature>
<keyword id="KW-1003">Cell membrane</keyword>
<keyword id="KW-0472">Membrane</keyword>
<keyword id="KW-1185">Reference proteome</keyword>
<keyword id="KW-0812">Transmembrane</keyword>
<keyword id="KW-1133">Transmembrane helix</keyword>
<accession>Q55827</accession>
<dbReference type="EMBL" id="BA000022">
    <property type="protein sequence ID" value="BAA10582.1"/>
    <property type="molecule type" value="Genomic_DNA"/>
</dbReference>
<dbReference type="PIR" id="S76638">
    <property type="entry name" value="S76638"/>
</dbReference>
<dbReference type="SMR" id="Q55827"/>
<dbReference type="STRING" id="1148.gene:10500086"/>
<dbReference type="PaxDb" id="1148-1001745"/>
<dbReference type="EnsemblBacteria" id="BAA10582">
    <property type="protein sequence ID" value="BAA10582"/>
    <property type="gene ID" value="BAA10582"/>
</dbReference>
<dbReference type="KEGG" id="syn:sll0481"/>
<dbReference type="eggNOG" id="ENOG5032UP9">
    <property type="taxonomic scope" value="Bacteria"/>
</dbReference>
<dbReference type="InParanoid" id="Q55827"/>
<dbReference type="Proteomes" id="UP000001425">
    <property type="component" value="Chromosome"/>
</dbReference>
<dbReference type="GO" id="GO:0005886">
    <property type="term" value="C:plasma membrane"/>
    <property type="evidence" value="ECO:0007669"/>
    <property type="project" value="UniProtKB-SubCell"/>
</dbReference>
<sequence length="155" mass="17362">MVQSTVELWQKNLHRAKQARDLVFDYALGTSLITLLPIAGYYSLRLLLVLFLLVKMCRDIGKIWQFPRGQDLLAIAGNIFGAIGAVITAAVVWVTLLAIGIWVPYFDSFKGFAGLFTLTWMLGQSTNQYYANGALGHRFHQPVQPDQESINHGHL</sequence>
<name>Y481_SYNY3</name>